<organism>
    <name type="scientific">Canine adenovirus serotype 2 (strain Toronto A 26-61)</name>
    <name type="common">CAdV-2</name>
    <name type="synonym">Canine adenovirus 2 (strain Toronto A 26-61)</name>
    <dbReference type="NCBI Taxonomy" id="69152"/>
    <lineage>
        <taxon>Viruses</taxon>
        <taxon>Varidnaviria</taxon>
        <taxon>Bamfordvirae</taxon>
        <taxon>Preplasmiviricota</taxon>
        <taxon>Tectiliviricetes</taxon>
        <taxon>Rowavirales</taxon>
        <taxon>Adenoviridae</taxon>
        <taxon>Mastadenovirus</taxon>
        <taxon>Canine mastadenovirus A</taxon>
    </lineage>
</organism>
<comment type="function">
    <text evidence="1">Plays a major role to prevent cellular inhibition of viral genome replication by nuclear bodies. Assembles an SCF-like E3 ubiquitin ligase complex based on the cellular proteins ELOB, ELOC, CUL5 and RBX1, in cooperation with viral E1B-55K. This viral RING-type ligase ubiquitinates cellular substrates prior to proteasomal degradation: p53/TP53, LIG4, MRE11-RAD50-NBS1 (MRN) complex, ITGA3, DAXX and BLM.</text>
</comment>
<comment type="subunit">
    <text evidence="1">Interacts with E1B-55k.</text>
</comment>
<comment type="subcellular location">
    <subcellularLocation>
        <location evidence="1">Host nucleus</location>
    </subcellularLocation>
    <subcellularLocation>
        <location evidence="1">Host cytoplasm</location>
    </subcellularLocation>
</comment>
<comment type="similarity">
    <text evidence="2">Belongs to the adenoviridae E4 30 to 34 kDa protein family.</text>
</comment>
<reference key="1">
    <citation type="submission" date="1996-11" db="EMBL/GenBank/DDBJ databases">
        <title>Complete DNA sequence and genomic organization of canine adenovirus type 2.</title>
        <authorList>
            <person name="Campbell J.B."/>
            <person name="Zhao Y."/>
        </authorList>
    </citation>
    <scope>NUCLEOTIDE SEQUENCE [LARGE SCALE GENOMIC DNA]</scope>
</reference>
<proteinExistence type="inferred from homology"/>
<dbReference type="EMBL" id="U77082">
    <property type="protein sequence ID" value="AAB38735.1"/>
    <property type="molecule type" value="Genomic_DNA"/>
</dbReference>
<dbReference type="RefSeq" id="AP_000634.1">
    <property type="nucleotide sequence ID" value="AC_000020.1"/>
</dbReference>
<dbReference type="Proteomes" id="UP000118097">
    <property type="component" value="Segment"/>
</dbReference>
<dbReference type="GO" id="GO:0030430">
    <property type="term" value="C:host cell cytoplasm"/>
    <property type="evidence" value="ECO:0007669"/>
    <property type="project" value="UniProtKB-SubCell"/>
</dbReference>
<dbReference type="GO" id="GO:0042025">
    <property type="term" value="C:host cell nucleus"/>
    <property type="evidence" value="ECO:0007669"/>
    <property type="project" value="UniProtKB-SubCell"/>
</dbReference>
<dbReference type="InterPro" id="IPR007615">
    <property type="entry name" value="Adenovirus_E4_30/34"/>
</dbReference>
<dbReference type="Pfam" id="PF04528">
    <property type="entry name" value="Adeno_E4_34"/>
    <property type="match status" value="1"/>
</dbReference>
<evidence type="ECO:0000250" key="1">
    <source>
        <dbReference type="UniProtKB" id="P03239"/>
    </source>
</evidence>
<evidence type="ECO:0000305" key="2"/>
<protein>
    <recommendedName>
        <fullName>Early E4 30 kDa protein</fullName>
    </recommendedName>
</protein>
<name>E434_ADECT</name>
<accession>P87568</accession>
<organismHost>
    <name type="scientific">Canis lupus familiaris</name>
    <name type="common">Dog</name>
    <name type="synonym">Canis familiaris</name>
    <dbReference type="NCBI Taxonomy" id="9615"/>
</organismHost>
<feature type="chain" id="PRO_0000221782" description="Early E4 30 kDa protein">
    <location>
        <begin position="1"/>
        <end position="259"/>
    </location>
</feature>
<sequence length="259" mass="30014">MEGNCTAETTCHVTAVVRVPKYCNCFALCYEIPILWDDVLHRHEKLLFGGFTCNAGIELIVTKHCCLAEAQTWRVHCHCSNSLSLQCMASKHVVQKVIEDFIKGGAMNKKYMWYREFVNSSRPDEINYVGSIIFRNTHYIYFRLSFFRTVHKACMEAIKRCINPELGVVLKSTYNYWLVLKCKSCSLQNYCSLKNCAVWVRSVIVRVLKEVEKTPVVLHQTTSKAEERRQSALRQAMMHGRCRQIQNLCLVNLNAFLHF</sequence>
<keyword id="KW-0244">Early protein</keyword>
<keyword id="KW-1035">Host cytoplasm</keyword>
<keyword id="KW-1048">Host nucleus</keyword>
<keyword id="KW-1185">Reference proteome</keyword>